<name>RUVB_RHOPT</name>
<sequence length="349" mass="37795">MTDPSRLVTPERRGDDLGDAALRPQNLSEFVGQQQARANLQVFIDAARKRKEALDHVLFVGPPGLGKTTLAQIVARELGVGFRATSGPVIAKAGDLAALLTNLEERDVLFIDEIHRLSPSVEEVLYPAMEDFQLDLIIGEGPAARSVKIDLSKFTLVGATTRAGLLTNPLRDRFGIPIRLNFYTIEELESIVTRGARVLGTPITADGANEIARRARGTPRIAGRLLRRVRDFASAADAEAIDRSIADHALGALEVDSAGLDAMDRRYLTTIALNYGGGPVGVETMAAALSEPRDAIEDIIEPYLIQCGYLQRTPRGRLLTDHAFRHLGLAAPSRDPAQFGLFGDTGDQE</sequence>
<reference key="1">
    <citation type="submission" date="2008-05" db="EMBL/GenBank/DDBJ databases">
        <title>Complete sequence of Rhodopseudomonas palustris TIE-1.</title>
        <authorList>
            <consortium name="US DOE Joint Genome Institute"/>
            <person name="Lucas S."/>
            <person name="Copeland A."/>
            <person name="Lapidus A."/>
            <person name="Glavina del Rio T."/>
            <person name="Dalin E."/>
            <person name="Tice H."/>
            <person name="Pitluck S."/>
            <person name="Chain P."/>
            <person name="Malfatti S."/>
            <person name="Shin M."/>
            <person name="Vergez L."/>
            <person name="Lang D."/>
            <person name="Schmutz J."/>
            <person name="Larimer F."/>
            <person name="Land M."/>
            <person name="Hauser L."/>
            <person name="Kyrpides N."/>
            <person name="Mikhailova N."/>
            <person name="Emerson D."/>
            <person name="Newman D.K."/>
            <person name="Roden E."/>
            <person name="Richardson P."/>
        </authorList>
    </citation>
    <scope>NUCLEOTIDE SEQUENCE [LARGE SCALE GENOMIC DNA]</scope>
    <source>
        <strain>TIE-1</strain>
    </source>
</reference>
<comment type="function">
    <text evidence="1">The RuvA-RuvB-RuvC complex processes Holliday junction (HJ) DNA during genetic recombination and DNA repair, while the RuvA-RuvB complex plays an important role in the rescue of blocked DNA replication forks via replication fork reversal (RFR). RuvA specifically binds to HJ cruciform DNA, conferring on it an open structure. The RuvB hexamer acts as an ATP-dependent pump, pulling dsDNA into and through the RuvAB complex. RuvB forms 2 homohexamers on either side of HJ DNA bound by 1 or 2 RuvA tetramers; 4 subunits per hexamer contact DNA at a time. Coordinated motions by a converter formed by DNA-disengaged RuvB subunits stimulates ATP hydrolysis and nucleotide exchange. Immobilization of the converter enables RuvB to convert the ATP-contained energy into a lever motion, pulling 2 nucleotides of DNA out of the RuvA tetramer per ATP hydrolyzed, thus driving DNA branch migration. The RuvB motors rotate together with the DNA substrate, which together with the progressing nucleotide cycle form the mechanistic basis for DNA recombination by continuous HJ branch migration. Branch migration allows RuvC to scan DNA until it finds its consensus sequence, where it cleaves and resolves cruciform DNA.</text>
</comment>
<comment type="catalytic activity">
    <reaction evidence="1">
        <text>ATP + H2O = ADP + phosphate + H(+)</text>
        <dbReference type="Rhea" id="RHEA:13065"/>
        <dbReference type="ChEBI" id="CHEBI:15377"/>
        <dbReference type="ChEBI" id="CHEBI:15378"/>
        <dbReference type="ChEBI" id="CHEBI:30616"/>
        <dbReference type="ChEBI" id="CHEBI:43474"/>
        <dbReference type="ChEBI" id="CHEBI:456216"/>
    </reaction>
</comment>
<comment type="subunit">
    <text evidence="1">Homohexamer. Forms an RuvA(8)-RuvB(12)-Holliday junction (HJ) complex. HJ DNA is sandwiched between 2 RuvA tetramers; dsDNA enters through RuvA and exits via RuvB. An RuvB hexamer assembles on each DNA strand where it exits the tetramer. Each RuvB hexamer is contacted by two RuvA subunits (via domain III) on 2 adjacent RuvB subunits; this complex drives branch migration. In the full resolvosome a probable DNA-RuvA(4)-RuvB(12)-RuvC(2) complex forms which resolves the HJ.</text>
</comment>
<comment type="subcellular location">
    <subcellularLocation>
        <location evidence="1">Cytoplasm</location>
    </subcellularLocation>
</comment>
<comment type="domain">
    <text evidence="1">Has 3 domains, the large (RuvB-L) and small ATPase (RuvB-S) domains and the C-terminal head (RuvB-H) domain. The head domain binds DNA, while the ATPase domains jointly bind ATP, ADP or are empty depending on the state of the subunit in the translocation cycle. During a single DNA translocation step the structure of each domain remains the same, but their relative positions change.</text>
</comment>
<comment type="similarity">
    <text evidence="1">Belongs to the RuvB family.</text>
</comment>
<gene>
    <name evidence="1" type="primary">ruvB</name>
    <name type="ordered locus">Rpal_1292</name>
</gene>
<evidence type="ECO:0000255" key="1">
    <source>
        <dbReference type="HAMAP-Rule" id="MF_00016"/>
    </source>
</evidence>
<proteinExistence type="inferred from homology"/>
<organism>
    <name type="scientific">Rhodopseudomonas palustris (strain TIE-1)</name>
    <dbReference type="NCBI Taxonomy" id="395960"/>
    <lineage>
        <taxon>Bacteria</taxon>
        <taxon>Pseudomonadati</taxon>
        <taxon>Pseudomonadota</taxon>
        <taxon>Alphaproteobacteria</taxon>
        <taxon>Hyphomicrobiales</taxon>
        <taxon>Nitrobacteraceae</taxon>
        <taxon>Rhodopseudomonas</taxon>
    </lineage>
</organism>
<dbReference type="EC" id="3.6.4.-" evidence="1"/>
<dbReference type="EMBL" id="CP001096">
    <property type="protein sequence ID" value="ACE99831.1"/>
    <property type="molecule type" value="Genomic_DNA"/>
</dbReference>
<dbReference type="RefSeq" id="WP_012494824.1">
    <property type="nucleotide sequence ID" value="NC_011004.1"/>
</dbReference>
<dbReference type="SMR" id="B3QHS4"/>
<dbReference type="KEGG" id="rpt:Rpal_1292"/>
<dbReference type="HOGENOM" id="CLU_055599_1_0_5"/>
<dbReference type="OrthoDB" id="9804478at2"/>
<dbReference type="Proteomes" id="UP000001725">
    <property type="component" value="Chromosome"/>
</dbReference>
<dbReference type="GO" id="GO:0005737">
    <property type="term" value="C:cytoplasm"/>
    <property type="evidence" value="ECO:0007669"/>
    <property type="project" value="UniProtKB-SubCell"/>
</dbReference>
<dbReference type="GO" id="GO:0048476">
    <property type="term" value="C:Holliday junction resolvase complex"/>
    <property type="evidence" value="ECO:0007669"/>
    <property type="project" value="UniProtKB-UniRule"/>
</dbReference>
<dbReference type="GO" id="GO:0005524">
    <property type="term" value="F:ATP binding"/>
    <property type="evidence" value="ECO:0007669"/>
    <property type="project" value="UniProtKB-UniRule"/>
</dbReference>
<dbReference type="GO" id="GO:0016887">
    <property type="term" value="F:ATP hydrolysis activity"/>
    <property type="evidence" value="ECO:0007669"/>
    <property type="project" value="InterPro"/>
</dbReference>
<dbReference type="GO" id="GO:0000400">
    <property type="term" value="F:four-way junction DNA binding"/>
    <property type="evidence" value="ECO:0007669"/>
    <property type="project" value="UniProtKB-UniRule"/>
</dbReference>
<dbReference type="GO" id="GO:0009378">
    <property type="term" value="F:four-way junction helicase activity"/>
    <property type="evidence" value="ECO:0007669"/>
    <property type="project" value="InterPro"/>
</dbReference>
<dbReference type="GO" id="GO:0006310">
    <property type="term" value="P:DNA recombination"/>
    <property type="evidence" value="ECO:0007669"/>
    <property type="project" value="UniProtKB-UniRule"/>
</dbReference>
<dbReference type="GO" id="GO:0006281">
    <property type="term" value="P:DNA repair"/>
    <property type="evidence" value="ECO:0007669"/>
    <property type="project" value="UniProtKB-UniRule"/>
</dbReference>
<dbReference type="CDD" id="cd00009">
    <property type="entry name" value="AAA"/>
    <property type="match status" value="1"/>
</dbReference>
<dbReference type="FunFam" id="3.40.50.300:FF:000073">
    <property type="entry name" value="Holliday junction ATP-dependent DNA helicase RuvB"/>
    <property type="match status" value="1"/>
</dbReference>
<dbReference type="Gene3D" id="1.10.8.60">
    <property type="match status" value="1"/>
</dbReference>
<dbReference type="Gene3D" id="3.40.50.300">
    <property type="entry name" value="P-loop containing nucleotide triphosphate hydrolases"/>
    <property type="match status" value="1"/>
</dbReference>
<dbReference type="Gene3D" id="1.10.10.10">
    <property type="entry name" value="Winged helix-like DNA-binding domain superfamily/Winged helix DNA-binding domain"/>
    <property type="match status" value="1"/>
</dbReference>
<dbReference type="HAMAP" id="MF_00016">
    <property type="entry name" value="DNA_HJ_migration_RuvB"/>
    <property type="match status" value="1"/>
</dbReference>
<dbReference type="InterPro" id="IPR003593">
    <property type="entry name" value="AAA+_ATPase"/>
</dbReference>
<dbReference type="InterPro" id="IPR041445">
    <property type="entry name" value="AAA_lid_4"/>
</dbReference>
<dbReference type="InterPro" id="IPR004605">
    <property type="entry name" value="DNA_helicase_Holl-junc_RuvB"/>
</dbReference>
<dbReference type="InterPro" id="IPR027417">
    <property type="entry name" value="P-loop_NTPase"/>
</dbReference>
<dbReference type="InterPro" id="IPR008824">
    <property type="entry name" value="RuvB-like_N"/>
</dbReference>
<dbReference type="InterPro" id="IPR008823">
    <property type="entry name" value="RuvB_C"/>
</dbReference>
<dbReference type="InterPro" id="IPR036388">
    <property type="entry name" value="WH-like_DNA-bd_sf"/>
</dbReference>
<dbReference type="InterPro" id="IPR036390">
    <property type="entry name" value="WH_DNA-bd_sf"/>
</dbReference>
<dbReference type="NCBIfam" id="NF000868">
    <property type="entry name" value="PRK00080.1"/>
    <property type="match status" value="1"/>
</dbReference>
<dbReference type="NCBIfam" id="TIGR00635">
    <property type="entry name" value="ruvB"/>
    <property type="match status" value="1"/>
</dbReference>
<dbReference type="PANTHER" id="PTHR42848">
    <property type="match status" value="1"/>
</dbReference>
<dbReference type="PANTHER" id="PTHR42848:SF1">
    <property type="entry name" value="HOLLIDAY JUNCTION BRANCH MIGRATION COMPLEX SUBUNIT RUVB"/>
    <property type="match status" value="1"/>
</dbReference>
<dbReference type="Pfam" id="PF17864">
    <property type="entry name" value="AAA_lid_4"/>
    <property type="match status" value="1"/>
</dbReference>
<dbReference type="Pfam" id="PF05491">
    <property type="entry name" value="RuvB_C"/>
    <property type="match status" value="1"/>
</dbReference>
<dbReference type="Pfam" id="PF05496">
    <property type="entry name" value="RuvB_N"/>
    <property type="match status" value="1"/>
</dbReference>
<dbReference type="SMART" id="SM00382">
    <property type="entry name" value="AAA"/>
    <property type="match status" value="1"/>
</dbReference>
<dbReference type="SUPFAM" id="SSF52540">
    <property type="entry name" value="P-loop containing nucleoside triphosphate hydrolases"/>
    <property type="match status" value="1"/>
</dbReference>
<dbReference type="SUPFAM" id="SSF46785">
    <property type="entry name" value="Winged helix' DNA-binding domain"/>
    <property type="match status" value="1"/>
</dbReference>
<keyword id="KW-0067">ATP-binding</keyword>
<keyword id="KW-0963">Cytoplasm</keyword>
<keyword id="KW-0227">DNA damage</keyword>
<keyword id="KW-0233">DNA recombination</keyword>
<keyword id="KW-0234">DNA repair</keyword>
<keyword id="KW-0238">DNA-binding</keyword>
<keyword id="KW-0378">Hydrolase</keyword>
<keyword id="KW-0547">Nucleotide-binding</keyword>
<accession>B3QHS4</accession>
<feature type="chain" id="PRO_1000089670" description="Holliday junction branch migration complex subunit RuvB">
    <location>
        <begin position="1"/>
        <end position="349"/>
    </location>
</feature>
<feature type="region of interest" description="Large ATPase domain (RuvB-L)" evidence="1">
    <location>
        <begin position="1"/>
        <end position="183"/>
    </location>
</feature>
<feature type="region of interest" description="Small ATPAse domain (RuvB-S)" evidence="1">
    <location>
        <begin position="184"/>
        <end position="254"/>
    </location>
</feature>
<feature type="region of interest" description="Head domain (RuvB-H)" evidence="1">
    <location>
        <begin position="257"/>
        <end position="349"/>
    </location>
</feature>
<feature type="binding site" evidence="1">
    <location>
        <position position="22"/>
    </location>
    <ligand>
        <name>ATP</name>
        <dbReference type="ChEBI" id="CHEBI:30616"/>
    </ligand>
</feature>
<feature type="binding site" evidence="1">
    <location>
        <position position="23"/>
    </location>
    <ligand>
        <name>ATP</name>
        <dbReference type="ChEBI" id="CHEBI:30616"/>
    </ligand>
</feature>
<feature type="binding site" evidence="1">
    <location>
        <position position="64"/>
    </location>
    <ligand>
        <name>ATP</name>
        <dbReference type="ChEBI" id="CHEBI:30616"/>
    </ligand>
</feature>
<feature type="binding site" evidence="1">
    <location>
        <position position="67"/>
    </location>
    <ligand>
        <name>ATP</name>
        <dbReference type="ChEBI" id="CHEBI:30616"/>
    </ligand>
</feature>
<feature type="binding site" evidence="1">
    <location>
        <position position="68"/>
    </location>
    <ligand>
        <name>ATP</name>
        <dbReference type="ChEBI" id="CHEBI:30616"/>
    </ligand>
</feature>
<feature type="binding site" evidence="1">
    <location>
        <position position="68"/>
    </location>
    <ligand>
        <name>Mg(2+)</name>
        <dbReference type="ChEBI" id="CHEBI:18420"/>
    </ligand>
</feature>
<feature type="binding site" evidence="1">
    <location>
        <position position="69"/>
    </location>
    <ligand>
        <name>ATP</name>
        <dbReference type="ChEBI" id="CHEBI:30616"/>
    </ligand>
</feature>
<feature type="binding site" evidence="1">
    <location>
        <begin position="130"/>
        <end position="132"/>
    </location>
    <ligand>
        <name>ATP</name>
        <dbReference type="ChEBI" id="CHEBI:30616"/>
    </ligand>
</feature>
<feature type="binding site" evidence="1">
    <location>
        <position position="173"/>
    </location>
    <ligand>
        <name>ATP</name>
        <dbReference type="ChEBI" id="CHEBI:30616"/>
    </ligand>
</feature>
<feature type="binding site" evidence="1">
    <location>
        <position position="183"/>
    </location>
    <ligand>
        <name>ATP</name>
        <dbReference type="ChEBI" id="CHEBI:30616"/>
    </ligand>
</feature>
<feature type="binding site" evidence="1">
    <location>
        <position position="220"/>
    </location>
    <ligand>
        <name>ATP</name>
        <dbReference type="ChEBI" id="CHEBI:30616"/>
    </ligand>
</feature>
<feature type="binding site" evidence="1">
    <location>
        <position position="293"/>
    </location>
    <ligand>
        <name>DNA</name>
        <dbReference type="ChEBI" id="CHEBI:16991"/>
    </ligand>
</feature>
<feature type="binding site" evidence="1">
    <location>
        <position position="312"/>
    </location>
    <ligand>
        <name>DNA</name>
        <dbReference type="ChEBI" id="CHEBI:16991"/>
    </ligand>
</feature>
<feature type="binding site" evidence="1">
    <location>
        <position position="317"/>
    </location>
    <ligand>
        <name>DNA</name>
        <dbReference type="ChEBI" id="CHEBI:16991"/>
    </ligand>
</feature>
<protein>
    <recommendedName>
        <fullName evidence="1">Holliday junction branch migration complex subunit RuvB</fullName>
        <ecNumber evidence="1">3.6.4.-</ecNumber>
    </recommendedName>
</protein>